<reference key="1">
    <citation type="journal article" date="2006" name="J. Bacteriol.">
        <title>Whole-genome sequence of Listeria welshimeri reveals common steps in genome reduction with Listeria innocua as compared to Listeria monocytogenes.</title>
        <authorList>
            <person name="Hain T."/>
            <person name="Steinweg C."/>
            <person name="Kuenne C.T."/>
            <person name="Billion A."/>
            <person name="Ghai R."/>
            <person name="Chatterjee S.S."/>
            <person name="Domann E."/>
            <person name="Kaerst U."/>
            <person name="Goesmann A."/>
            <person name="Bekel T."/>
            <person name="Bartels D."/>
            <person name="Kaiser O."/>
            <person name="Meyer F."/>
            <person name="Puehler A."/>
            <person name="Weisshaar B."/>
            <person name="Wehland J."/>
            <person name="Liang C."/>
            <person name="Dandekar T."/>
            <person name="Lampidis R."/>
            <person name="Kreft J."/>
            <person name="Goebel W."/>
            <person name="Chakraborty T."/>
        </authorList>
    </citation>
    <scope>NUCLEOTIDE SEQUENCE [LARGE SCALE GENOMIC DNA]</scope>
    <source>
        <strain>ATCC 35897 / DSM 20650 / CCUG 15529 / CIP 8149 / NCTC 11857 / SLCC 5334 / V8</strain>
    </source>
</reference>
<keyword id="KW-0687">Ribonucleoprotein</keyword>
<keyword id="KW-0689">Ribosomal protein</keyword>
<keyword id="KW-0694">RNA-binding</keyword>
<keyword id="KW-0699">rRNA-binding</keyword>
<gene>
    <name evidence="1" type="primary">rpsH</name>
    <name type="ordered locus">lwe2568</name>
</gene>
<protein>
    <recommendedName>
        <fullName evidence="1">Small ribosomal subunit protein uS8</fullName>
    </recommendedName>
    <alternativeName>
        <fullName evidence="2">30S ribosomal protein S8</fullName>
    </alternativeName>
</protein>
<organism>
    <name type="scientific">Listeria welshimeri serovar 6b (strain ATCC 35897 / DSM 20650 / CCUG 15529 / CIP 8149 / NCTC 11857 / SLCC 5334 / V8)</name>
    <dbReference type="NCBI Taxonomy" id="386043"/>
    <lineage>
        <taxon>Bacteria</taxon>
        <taxon>Bacillati</taxon>
        <taxon>Bacillota</taxon>
        <taxon>Bacilli</taxon>
        <taxon>Bacillales</taxon>
        <taxon>Listeriaceae</taxon>
        <taxon>Listeria</taxon>
    </lineage>
</organism>
<name>RS8_LISW6</name>
<feature type="chain" id="PRO_0000290869" description="Small ribosomal subunit protein uS8">
    <location>
        <begin position="1"/>
        <end position="132"/>
    </location>
</feature>
<sequence>MVMTDPIADFLTRIRNANMVKHDKLELPASKIKKEIAEILKREGFIRDVEYIEDDNAGTIRVFLKYGATGERVITGLKRISKPGLRVYAKSTEVPKVLNGLGIAIVSTSQGVLTDKEARAKQVGGEVLAYVW</sequence>
<comment type="function">
    <text evidence="1">One of the primary rRNA binding proteins, it binds directly to 16S rRNA central domain where it helps coordinate assembly of the platform of the 30S subunit.</text>
</comment>
<comment type="subunit">
    <text evidence="1">Part of the 30S ribosomal subunit. Contacts proteins S5 and S12.</text>
</comment>
<comment type="similarity">
    <text evidence="1">Belongs to the universal ribosomal protein uS8 family.</text>
</comment>
<evidence type="ECO:0000255" key="1">
    <source>
        <dbReference type="HAMAP-Rule" id="MF_01302"/>
    </source>
</evidence>
<evidence type="ECO:0000305" key="2"/>
<proteinExistence type="inferred from homology"/>
<dbReference type="EMBL" id="AM263198">
    <property type="protein sequence ID" value="CAK21986.1"/>
    <property type="molecule type" value="Genomic_DNA"/>
</dbReference>
<dbReference type="RefSeq" id="WP_003720937.1">
    <property type="nucleotide sequence ID" value="NC_008555.1"/>
</dbReference>
<dbReference type="SMR" id="A0ALV4"/>
<dbReference type="STRING" id="386043.lwe2568"/>
<dbReference type="GeneID" id="93240499"/>
<dbReference type="KEGG" id="lwe:lwe2568"/>
<dbReference type="eggNOG" id="COG0096">
    <property type="taxonomic scope" value="Bacteria"/>
</dbReference>
<dbReference type="HOGENOM" id="CLU_098428_0_2_9"/>
<dbReference type="OrthoDB" id="9802617at2"/>
<dbReference type="Proteomes" id="UP000000779">
    <property type="component" value="Chromosome"/>
</dbReference>
<dbReference type="GO" id="GO:1990904">
    <property type="term" value="C:ribonucleoprotein complex"/>
    <property type="evidence" value="ECO:0007669"/>
    <property type="project" value="UniProtKB-KW"/>
</dbReference>
<dbReference type="GO" id="GO:0005840">
    <property type="term" value="C:ribosome"/>
    <property type="evidence" value="ECO:0007669"/>
    <property type="project" value="UniProtKB-KW"/>
</dbReference>
<dbReference type="GO" id="GO:0019843">
    <property type="term" value="F:rRNA binding"/>
    <property type="evidence" value="ECO:0007669"/>
    <property type="project" value="UniProtKB-UniRule"/>
</dbReference>
<dbReference type="GO" id="GO:0003735">
    <property type="term" value="F:structural constituent of ribosome"/>
    <property type="evidence" value="ECO:0007669"/>
    <property type="project" value="InterPro"/>
</dbReference>
<dbReference type="GO" id="GO:0006412">
    <property type="term" value="P:translation"/>
    <property type="evidence" value="ECO:0007669"/>
    <property type="project" value="UniProtKB-UniRule"/>
</dbReference>
<dbReference type="FunFam" id="3.30.1370.30:FF:000002">
    <property type="entry name" value="30S ribosomal protein S8"/>
    <property type="match status" value="1"/>
</dbReference>
<dbReference type="FunFam" id="3.30.1490.10:FF:000001">
    <property type="entry name" value="30S ribosomal protein S8"/>
    <property type="match status" value="1"/>
</dbReference>
<dbReference type="Gene3D" id="3.30.1370.30">
    <property type="match status" value="1"/>
</dbReference>
<dbReference type="Gene3D" id="3.30.1490.10">
    <property type="match status" value="1"/>
</dbReference>
<dbReference type="HAMAP" id="MF_01302_B">
    <property type="entry name" value="Ribosomal_uS8_B"/>
    <property type="match status" value="1"/>
</dbReference>
<dbReference type="InterPro" id="IPR000630">
    <property type="entry name" value="Ribosomal_uS8"/>
</dbReference>
<dbReference type="InterPro" id="IPR047863">
    <property type="entry name" value="Ribosomal_uS8_CS"/>
</dbReference>
<dbReference type="InterPro" id="IPR035987">
    <property type="entry name" value="Ribosomal_uS8_sf"/>
</dbReference>
<dbReference type="NCBIfam" id="NF001109">
    <property type="entry name" value="PRK00136.1"/>
    <property type="match status" value="1"/>
</dbReference>
<dbReference type="PANTHER" id="PTHR11758">
    <property type="entry name" value="40S RIBOSOMAL PROTEIN S15A"/>
    <property type="match status" value="1"/>
</dbReference>
<dbReference type="Pfam" id="PF00410">
    <property type="entry name" value="Ribosomal_S8"/>
    <property type="match status" value="1"/>
</dbReference>
<dbReference type="SUPFAM" id="SSF56047">
    <property type="entry name" value="Ribosomal protein S8"/>
    <property type="match status" value="1"/>
</dbReference>
<dbReference type="PROSITE" id="PS00053">
    <property type="entry name" value="RIBOSOMAL_S8"/>
    <property type="match status" value="1"/>
</dbReference>
<accession>A0ALV4</accession>